<dbReference type="EC" id="1.16.1.9"/>
<dbReference type="EMBL" id="X75950">
    <property type="protein sequence ID" value="CAA53553.1"/>
    <property type="molecule type" value="Genomic_DNA"/>
</dbReference>
<dbReference type="EMBL" id="Z28220">
    <property type="protein sequence ID" value="CAA82065.1"/>
    <property type="molecule type" value="Genomic_DNA"/>
</dbReference>
<dbReference type="EMBL" id="BK006944">
    <property type="protein sequence ID" value="DAA08949.1"/>
    <property type="molecule type" value="Genomic_DNA"/>
</dbReference>
<dbReference type="PIR" id="S38063">
    <property type="entry name" value="S38063"/>
</dbReference>
<dbReference type="RefSeq" id="NP_012702.1">
    <property type="nucleotide sequence ID" value="NM_001179785.1"/>
</dbReference>
<dbReference type="SMR" id="P36033"/>
<dbReference type="BioGRID" id="33945">
    <property type="interactions" value="60"/>
</dbReference>
<dbReference type="DIP" id="DIP-7473N"/>
<dbReference type="FunCoup" id="P36033">
    <property type="interactions" value="438"/>
</dbReference>
<dbReference type="IntAct" id="P36033">
    <property type="interactions" value="3"/>
</dbReference>
<dbReference type="MINT" id="P36033"/>
<dbReference type="STRING" id="4932.YKL220C"/>
<dbReference type="TCDB" id="5.B.1.5.3">
    <property type="family name" value="the phagocyte (gp91(phox)) nadph oxidase family"/>
</dbReference>
<dbReference type="GlyCosmos" id="P36033">
    <property type="glycosylation" value="5 sites, No reported glycans"/>
</dbReference>
<dbReference type="GlyGen" id="P36033">
    <property type="glycosylation" value="5 sites"/>
</dbReference>
<dbReference type="PaxDb" id="4932-YKL220C"/>
<dbReference type="PeptideAtlas" id="P36033"/>
<dbReference type="EnsemblFungi" id="YKL220C_mRNA">
    <property type="protein sequence ID" value="YKL220C"/>
    <property type="gene ID" value="YKL220C"/>
</dbReference>
<dbReference type="GeneID" id="853660"/>
<dbReference type="KEGG" id="sce:YKL220C"/>
<dbReference type="AGR" id="SGD:S000001703"/>
<dbReference type="SGD" id="S000001703">
    <property type="gene designation" value="FRE2"/>
</dbReference>
<dbReference type="VEuPathDB" id="FungiDB:YKL220C"/>
<dbReference type="eggNOG" id="KOG0039">
    <property type="taxonomic scope" value="Eukaryota"/>
</dbReference>
<dbReference type="GeneTree" id="ENSGT00940000176303"/>
<dbReference type="HOGENOM" id="CLU_010365_4_0_1"/>
<dbReference type="InParanoid" id="P36033"/>
<dbReference type="OMA" id="GWSYRTF"/>
<dbReference type="OrthoDB" id="4494341at2759"/>
<dbReference type="BioCyc" id="MetaCyc:YKL220C-MONOMER"/>
<dbReference type="BioCyc" id="YEAST:YKL220C-MONOMER"/>
<dbReference type="BioGRID-ORCS" id="853660">
    <property type="hits" value="1 hit in 10 CRISPR screens"/>
</dbReference>
<dbReference type="PRO" id="PR:P36033"/>
<dbReference type="Proteomes" id="UP000002311">
    <property type="component" value="Chromosome XI"/>
</dbReference>
<dbReference type="RNAct" id="P36033">
    <property type="molecule type" value="protein"/>
</dbReference>
<dbReference type="GO" id="GO:0000324">
    <property type="term" value="C:fungal-type vacuole"/>
    <property type="evidence" value="ECO:0007005"/>
    <property type="project" value="SGD"/>
</dbReference>
<dbReference type="GO" id="GO:0005886">
    <property type="term" value="C:plasma membrane"/>
    <property type="evidence" value="ECO:0000314"/>
    <property type="project" value="SGD"/>
</dbReference>
<dbReference type="GO" id="GO:0052851">
    <property type="term" value="F:ferric-chelate reductase (NADPH) activity"/>
    <property type="evidence" value="ECO:0007669"/>
    <property type="project" value="UniProtKB-EC"/>
</dbReference>
<dbReference type="GO" id="GO:0000293">
    <property type="term" value="F:ferric-chelate reductase activity"/>
    <property type="evidence" value="ECO:0000314"/>
    <property type="project" value="SGD"/>
</dbReference>
<dbReference type="GO" id="GO:0046872">
    <property type="term" value="F:metal ion binding"/>
    <property type="evidence" value="ECO:0007669"/>
    <property type="project" value="UniProtKB-KW"/>
</dbReference>
<dbReference type="GO" id="GO:0015677">
    <property type="term" value="P:copper ion import"/>
    <property type="evidence" value="ECO:0000314"/>
    <property type="project" value="SGD"/>
</dbReference>
<dbReference type="GO" id="GO:0006879">
    <property type="term" value="P:intracellular iron ion homeostasis"/>
    <property type="evidence" value="ECO:0000318"/>
    <property type="project" value="GO_Central"/>
</dbReference>
<dbReference type="GO" id="GO:0006826">
    <property type="term" value="P:iron ion transport"/>
    <property type="evidence" value="ECO:0000314"/>
    <property type="project" value="SGD"/>
</dbReference>
<dbReference type="GO" id="GO:0000184">
    <property type="term" value="P:nuclear-transcribed mRNA catabolic process, nonsense-mediated decay"/>
    <property type="evidence" value="ECO:0000314"/>
    <property type="project" value="SGD"/>
</dbReference>
<dbReference type="CDD" id="cd06186">
    <property type="entry name" value="NOX_Duox_like_FAD_NADP"/>
    <property type="match status" value="1"/>
</dbReference>
<dbReference type="FunFam" id="3.40.50.80:FF:000035">
    <property type="entry name" value="FRE4p Ferric reductase"/>
    <property type="match status" value="1"/>
</dbReference>
<dbReference type="Gene3D" id="3.40.50.80">
    <property type="entry name" value="Nucleotide-binding domain of ferredoxin-NADP reductase (FNR) module"/>
    <property type="match status" value="1"/>
</dbReference>
<dbReference type="Gene3D" id="2.40.30.10">
    <property type="entry name" value="Translation factors"/>
    <property type="match status" value="1"/>
</dbReference>
<dbReference type="InterPro" id="IPR013112">
    <property type="entry name" value="FAD-bd_8"/>
</dbReference>
<dbReference type="InterPro" id="IPR017927">
    <property type="entry name" value="FAD-bd_FR_type"/>
</dbReference>
<dbReference type="InterPro" id="IPR013130">
    <property type="entry name" value="Fe3_Rdtase_TM_dom"/>
</dbReference>
<dbReference type="InterPro" id="IPR013121">
    <property type="entry name" value="Fe_red_NAD-bd_6"/>
</dbReference>
<dbReference type="InterPro" id="IPR051410">
    <property type="entry name" value="Ferric/Cupric_Reductase"/>
</dbReference>
<dbReference type="InterPro" id="IPR039261">
    <property type="entry name" value="FNR_nucleotide-bd"/>
</dbReference>
<dbReference type="InterPro" id="IPR017938">
    <property type="entry name" value="Riboflavin_synthase-like_b-brl"/>
</dbReference>
<dbReference type="PANTHER" id="PTHR32361:SF9">
    <property type="entry name" value="FERRIC REDUCTASE TRANSMEMBRANE COMPONENT 3-RELATED"/>
    <property type="match status" value="1"/>
</dbReference>
<dbReference type="PANTHER" id="PTHR32361">
    <property type="entry name" value="FERRIC/CUPRIC REDUCTASE TRANSMEMBRANE COMPONENT"/>
    <property type="match status" value="1"/>
</dbReference>
<dbReference type="Pfam" id="PF08022">
    <property type="entry name" value="FAD_binding_8"/>
    <property type="match status" value="1"/>
</dbReference>
<dbReference type="Pfam" id="PF01794">
    <property type="entry name" value="Ferric_reduct"/>
    <property type="match status" value="1"/>
</dbReference>
<dbReference type="Pfam" id="PF08030">
    <property type="entry name" value="NAD_binding_6"/>
    <property type="match status" value="1"/>
</dbReference>
<dbReference type="SFLD" id="SFLDF00464">
    <property type="entry name" value="Ferric/cupric_reductase"/>
    <property type="match status" value="1"/>
</dbReference>
<dbReference type="SFLD" id="SFLDS00052">
    <property type="entry name" value="Ferric_Reductase_Domain"/>
    <property type="match status" value="1"/>
</dbReference>
<dbReference type="SFLD" id="SFLDG01168">
    <property type="entry name" value="Ferric_reductase_subgroup_(FRE"/>
    <property type="match status" value="1"/>
</dbReference>
<dbReference type="SUPFAM" id="SSF52343">
    <property type="entry name" value="Ferredoxin reductase-like, C-terminal NADP-linked domain"/>
    <property type="match status" value="1"/>
</dbReference>
<dbReference type="SUPFAM" id="SSF63380">
    <property type="entry name" value="Riboflavin synthase domain-like"/>
    <property type="match status" value="1"/>
</dbReference>
<dbReference type="PROSITE" id="PS51384">
    <property type="entry name" value="FAD_FR"/>
    <property type="match status" value="1"/>
</dbReference>
<protein>
    <recommendedName>
        <fullName>Ferric/cupric reductase transmembrane component 2</fullName>
        <ecNumber>1.16.1.9</ecNumber>
    </recommendedName>
    <alternativeName>
        <fullName>Ferric-chelate reductase 2</fullName>
    </alternativeName>
</protein>
<sequence length="711" mass="80072">MHWTSILSAILLFCLSGARASPAKTVIRNKVPLLVTNACTRIFQKVTWEYTSKSKRSSPVCSYEPAFQSMLYCIYETLDEKGYSNKTLEKTFSTIKKNCASYSDALQNMTNSEFYDVLNNGTRHMTPYVKGSANLTYPVEMDTQLRKAYYHALHGFYANLDVGNIYGGIICAYFVAIMAFAGVLHCMNYTPFKTVLLKQKLVGYVRGYLTLPTIGSKHASDFSYFRIFTGYLPTRLEGIIILGYLVLHTVFLAYGYEYDPENIIFKSRRVQVARYVADRSGVLAFAHFPLIVLFAGRNNFLEYISGVKYTSFIMFHKWLGRMMFLDAMIHGSAYTSYTVANKTWATSKNRLYWQFGVAALCLAGTMVFFSFAVFRKYFYEAFLFLHIVLGAMFFYACWEHVVSLSGIEWIYTAIAIWIVDRIIRIIKASYFGFPKASLQLIGDDLIRLTVKKPARPWRAKPGQYVFVSFLHPLYFWQSHPFTVLDSVSKNGELVIILKEKKGVTRLVKKYVCRNGGKTSMRLAIEGPYGSSSPVNNYNNVLLLTGGTGLPGPIAHAIKLGKTSAAAGKQSVKLVIAVRGFDVLEAYKPELMCLENLNVQLHIYNTMEVPSLTPSDSLDISQQDEKADEKGTVVATTLEKSANPLGFDGVVFHCGRPNVKELLHEAAELSGSLSVVCCGPPIFVDKVRNETAKIVLDKSAKAIEYFEEYQCW</sequence>
<organism>
    <name type="scientific">Saccharomyces cerevisiae (strain ATCC 204508 / S288c)</name>
    <name type="common">Baker's yeast</name>
    <dbReference type="NCBI Taxonomy" id="559292"/>
    <lineage>
        <taxon>Eukaryota</taxon>
        <taxon>Fungi</taxon>
        <taxon>Dikarya</taxon>
        <taxon>Ascomycota</taxon>
        <taxon>Saccharomycotina</taxon>
        <taxon>Saccharomycetes</taxon>
        <taxon>Saccharomycetales</taxon>
        <taxon>Saccharomycetaceae</taxon>
        <taxon>Saccharomyces</taxon>
    </lineage>
</organism>
<feature type="signal peptide" evidence="2">
    <location>
        <begin position="1"/>
        <end position="23"/>
    </location>
</feature>
<feature type="chain" id="PRO_0000010138" description="Ferric/cupric reductase transmembrane component 2">
    <location>
        <begin position="24"/>
        <end position="711"/>
    </location>
</feature>
<feature type="topological domain" description="Extracellular" evidence="2">
    <location>
        <begin position="24"/>
        <end position="164"/>
    </location>
</feature>
<feature type="transmembrane region" description="Helical; Name=1" evidence="2">
    <location>
        <begin position="165"/>
        <end position="185"/>
    </location>
</feature>
<feature type="topological domain" description="Cytoplasmic" evidence="2">
    <location>
        <begin position="186"/>
        <end position="235"/>
    </location>
</feature>
<feature type="transmembrane region" description="Helical; Name=2" evidence="2">
    <location>
        <begin position="236"/>
        <end position="256"/>
    </location>
</feature>
<feature type="topological domain" description="Extracellular" evidence="2">
    <location>
        <begin position="257"/>
        <end position="280"/>
    </location>
</feature>
<feature type="transmembrane region" description="Helical; Name=3" evidence="2">
    <location>
        <begin position="281"/>
        <end position="301"/>
    </location>
</feature>
<feature type="topological domain" description="Cytoplasmic" evidence="2">
    <location>
        <begin position="302"/>
        <end position="317"/>
    </location>
</feature>
<feature type="transmembrane region" description="Helical; Name=4" evidence="2">
    <location>
        <begin position="318"/>
        <end position="340"/>
    </location>
</feature>
<feature type="topological domain" description="Extracellular" evidence="2">
    <location>
        <begin position="341"/>
        <end position="353"/>
    </location>
</feature>
<feature type="transmembrane region" description="Helical; Name=5" evidence="2">
    <location>
        <begin position="354"/>
        <end position="374"/>
    </location>
</feature>
<feature type="topological domain" description="Cytoplasmic" evidence="2">
    <location>
        <begin position="375"/>
        <end position="377"/>
    </location>
</feature>
<feature type="transmembrane region" description="Helical; Name=6" evidence="2">
    <location>
        <begin position="378"/>
        <end position="398"/>
    </location>
</feature>
<feature type="topological domain" description="Extracellular" evidence="2">
    <location>
        <begin position="399"/>
        <end position="400"/>
    </location>
</feature>
<feature type="transmembrane region" description="Helical; Name=7" evidence="2">
    <location>
        <begin position="401"/>
        <end position="423"/>
    </location>
</feature>
<feature type="topological domain" description="Cytoplasmic" evidence="2">
    <location>
        <begin position="424"/>
        <end position="711"/>
    </location>
</feature>
<feature type="domain" description="Ferric oxidoreductase">
    <location>
        <begin position="280"/>
        <end position="414"/>
    </location>
</feature>
<feature type="domain" description="FAD-binding FR-type" evidence="3">
    <location>
        <begin position="415"/>
        <end position="534"/>
    </location>
</feature>
<feature type="binding site" description="axial binding residue" evidence="1">
    <location>
        <position position="316"/>
    </location>
    <ligand>
        <name>heme</name>
        <dbReference type="ChEBI" id="CHEBI:30413"/>
        <label>1</label>
    </ligand>
    <ligandPart>
        <name>Fe</name>
        <dbReference type="ChEBI" id="CHEBI:18248"/>
    </ligandPart>
</feature>
<feature type="binding site" description="axial binding residue" evidence="1">
    <location>
        <position position="330"/>
    </location>
    <ligand>
        <name>heme</name>
        <dbReference type="ChEBI" id="CHEBI:30413"/>
        <label>2</label>
    </ligand>
    <ligandPart>
        <name>Fe</name>
        <dbReference type="ChEBI" id="CHEBI:18248"/>
    </ligandPart>
</feature>
<feature type="binding site" description="axial binding residue" evidence="1">
    <location>
        <position position="386"/>
    </location>
    <ligand>
        <name>heme</name>
        <dbReference type="ChEBI" id="CHEBI:30413"/>
        <label>1</label>
    </ligand>
    <ligandPart>
        <name>Fe</name>
        <dbReference type="ChEBI" id="CHEBI:18248"/>
    </ligandPart>
</feature>
<feature type="binding site" description="axial binding residue" evidence="1">
    <location>
        <position position="400"/>
    </location>
    <ligand>
        <name>heme</name>
        <dbReference type="ChEBI" id="CHEBI:30413"/>
        <label>2</label>
    </ligand>
    <ligandPart>
        <name>Fe</name>
        <dbReference type="ChEBI" id="CHEBI:18248"/>
    </ligandPart>
</feature>
<feature type="binding site" evidence="2">
    <location>
        <begin position="479"/>
        <end position="485"/>
    </location>
    <ligand>
        <name>FAD</name>
        <dbReference type="ChEBI" id="CHEBI:57692"/>
    </ligand>
</feature>
<feature type="binding site" evidence="2">
    <location>
        <begin position="526"/>
        <end position="529"/>
    </location>
    <ligand>
        <name>NADP(+)</name>
        <dbReference type="ChEBI" id="CHEBI:58349"/>
    </ligand>
</feature>
<feature type="binding site" evidence="2">
    <location>
        <begin position="677"/>
        <end position="678"/>
    </location>
    <ligand>
        <name>NADP(+)</name>
        <dbReference type="ChEBI" id="CHEBI:58349"/>
    </ligand>
</feature>
<feature type="glycosylation site" description="N-linked (GlcNAc...) asparagine" evidence="2">
    <location>
        <position position="85"/>
    </location>
</feature>
<feature type="glycosylation site" description="N-linked (GlcNAc...) asparagine" evidence="2">
    <location>
        <position position="108"/>
    </location>
</feature>
<feature type="glycosylation site" description="N-linked (GlcNAc...) asparagine" evidence="2">
    <location>
        <position position="120"/>
    </location>
</feature>
<feature type="glycosylation site" description="N-linked (GlcNAc...) asparagine" evidence="2">
    <location>
        <position position="134"/>
    </location>
</feature>
<feature type="glycosylation site" description="N-linked (GlcNAc...) asparagine" evidence="2">
    <location>
        <position position="341"/>
    </location>
</feature>
<reference key="1">
    <citation type="journal article" date="1994" name="Yeast">
        <title>Sequencing of a 13.2 kb segment next to the left telomere of yeast chromosome XI revealed five open reading frames and recent recombination events with the right arms of chromosomes III and V.</title>
        <authorList>
            <person name="Alexandraki D."/>
            <person name="Tzermia M."/>
        </authorList>
    </citation>
    <scope>NUCLEOTIDE SEQUENCE [GENOMIC DNA]</scope>
    <source>
        <strain>ATCC 204508 / S288c</strain>
    </source>
</reference>
<reference key="2">
    <citation type="journal article" date="1994" name="Nature">
        <title>Complete DNA sequence of yeast chromosome XI.</title>
        <authorList>
            <person name="Dujon B."/>
            <person name="Alexandraki D."/>
            <person name="Andre B."/>
            <person name="Ansorge W."/>
            <person name="Baladron V."/>
            <person name="Ballesta J.P.G."/>
            <person name="Banrevi A."/>
            <person name="Bolle P.-A."/>
            <person name="Bolotin-Fukuhara M."/>
            <person name="Bossier P."/>
            <person name="Bou G."/>
            <person name="Boyer J."/>
            <person name="Buitrago M.J."/>
            <person name="Cheret G."/>
            <person name="Colleaux L."/>
            <person name="Daignan-Fornier B."/>
            <person name="del Rey F."/>
            <person name="Dion C."/>
            <person name="Domdey H."/>
            <person name="Duesterhoeft A."/>
            <person name="Duesterhus S."/>
            <person name="Entian K.-D."/>
            <person name="Erfle H."/>
            <person name="Esteban P.F."/>
            <person name="Feldmann H."/>
            <person name="Fernandes L."/>
            <person name="Fobo G.M."/>
            <person name="Fritz C."/>
            <person name="Fukuhara H."/>
            <person name="Gabel C."/>
            <person name="Gaillon L."/>
            <person name="Garcia-Cantalejo J.M."/>
            <person name="Garcia-Ramirez J.J."/>
            <person name="Gent M.E."/>
            <person name="Ghazvini M."/>
            <person name="Goffeau A."/>
            <person name="Gonzalez A."/>
            <person name="Grothues D."/>
            <person name="Guerreiro P."/>
            <person name="Hegemann J.H."/>
            <person name="Hewitt N."/>
            <person name="Hilger F."/>
            <person name="Hollenberg C.P."/>
            <person name="Horaitis O."/>
            <person name="Indge K.J."/>
            <person name="Jacquier A."/>
            <person name="James C.M."/>
            <person name="Jauniaux J.-C."/>
            <person name="Jimenez A."/>
            <person name="Keuchel H."/>
            <person name="Kirchrath L."/>
            <person name="Kleine K."/>
            <person name="Koetter P."/>
            <person name="Legrain P."/>
            <person name="Liebl S."/>
            <person name="Louis E.J."/>
            <person name="Maia e Silva A."/>
            <person name="Marck C."/>
            <person name="Monnier A.-L."/>
            <person name="Moestl D."/>
            <person name="Mueller S."/>
            <person name="Obermaier B."/>
            <person name="Oliver S.G."/>
            <person name="Pallier C."/>
            <person name="Pascolo S."/>
            <person name="Pfeiffer F."/>
            <person name="Philippsen P."/>
            <person name="Planta R.J."/>
            <person name="Pohl F.M."/>
            <person name="Pohl T.M."/>
            <person name="Poehlmann R."/>
            <person name="Portetelle D."/>
            <person name="Purnelle B."/>
            <person name="Puzos V."/>
            <person name="Ramezani Rad M."/>
            <person name="Rasmussen S.W."/>
            <person name="Remacha M.A."/>
            <person name="Revuelta J.L."/>
            <person name="Richard G.-F."/>
            <person name="Rieger M."/>
            <person name="Rodrigues-Pousada C."/>
            <person name="Rose M."/>
            <person name="Rupp T."/>
            <person name="Santos M.A."/>
            <person name="Schwager C."/>
            <person name="Sensen C."/>
            <person name="Skala J."/>
            <person name="Soares H."/>
            <person name="Sor F."/>
            <person name="Stegemann J."/>
            <person name="Tettelin H."/>
            <person name="Thierry A."/>
            <person name="Tzermia M."/>
            <person name="Urrestarazu L.A."/>
            <person name="van Dyck L."/>
            <person name="van Vliet-Reedijk J.C."/>
            <person name="Valens M."/>
            <person name="Vandenbol M."/>
            <person name="Vilela C."/>
            <person name="Vissers S."/>
            <person name="von Wettstein D."/>
            <person name="Voss H."/>
            <person name="Wiemann S."/>
            <person name="Xu G."/>
            <person name="Zimmermann J."/>
            <person name="Haasemann M."/>
            <person name="Becker I."/>
            <person name="Mewes H.-W."/>
        </authorList>
    </citation>
    <scope>NUCLEOTIDE SEQUENCE [LARGE SCALE GENOMIC DNA]</scope>
    <source>
        <strain>ATCC 204508 / S288c</strain>
    </source>
</reference>
<reference key="3">
    <citation type="journal article" date="2014" name="G3 (Bethesda)">
        <title>The reference genome sequence of Saccharomyces cerevisiae: Then and now.</title>
        <authorList>
            <person name="Engel S.R."/>
            <person name="Dietrich F.S."/>
            <person name="Fisk D.G."/>
            <person name="Binkley G."/>
            <person name="Balakrishnan R."/>
            <person name="Costanzo M.C."/>
            <person name="Dwight S.S."/>
            <person name="Hitz B.C."/>
            <person name="Karra K."/>
            <person name="Nash R.S."/>
            <person name="Weng S."/>
            <person name="Wong E.D."/>
            <person name="Lloyd P."/>
            <person name="Skrzypek M.S."/>
            <person name="Miyasato S.R."/>
            <person name="Simison M."/>
            <person name="Cherry J.M."/>
        </authorList>
    </citation>
    <scope>GENOME REANNOTATION</scope>
    <source>
        <strain>ATCC 204508 / S288c</strain>
    </source>
</reference>
<reference key="4">
    <citation type="journal article" date="1994" name="Mol. Cell. Biol.">
        <title>Two distinctly regulated genes are required for ferric reduction, the first step of iron uptake in Saccharomyces cerevisiae.</title>
        <authorList>
            <person name="Georgatsou E."/>
            <person name="Alexandraki D."/>
        </authorList>
    </citation>
    <scope>CHARACTERIZATION</scope>
    <scope>SUBCELLULAR LOCATION</scope>
    <source>
        <strain>ATCC 204508 / S288c</strain>
    </source>
</reference>
<reference key="5">
    <citation type="journal article" date="1995" name="EMBO J.">
        <title>AFT1: a mediator of iron regulated transcriptional control in Saccharomyces cerevisiae.</title>
        <authorList>
            <person name="Yamaguchi-Iwai Y."/>
            <person name="Dancis A."/>
            <person name="Klausner R.D."/>
        </authorList>
    </citation>
    <scope>INDUCTION</scope>
</reference>
<reference key="6">
    <citation type="journal article" date="1997" name="J. Biol. Chem.">
        <title>The yeast Fre1p/Fre2p cupric reductases facilitate copper uptake and are regulated by the copper-modulated Mac1p activator.</title>
        <authorList>
            <person name="Georgatsou E."/>
            <person name="Mavrogiannis L.A."/>
            <person name="Fragiadakis G.S."/>
            <person name="Alexandraki D."/>
        </authorList>
    </citation>
    <scope>FUNCTION</scope>
    <scope>INDUCTION</scope>
</reference>
<reference key="7">
    <citation type="journal article" date="1997" name="Yeast">
        <title>The AFT1 transcriptional factor is differentially required for expression of high-affinity iron uptake genes in Saccharomyces cerevisiae.</title>
        <authorList>
            <person name="Casas C."/>
            <person name="Aldea M."/>
            <person name="Espinet C."/>
            <person name="Gallego C."/>
            <person name="Gil R."/>
            <person name="Herrero E."/>
        </authorList>
    </citation>
    <scope>INDUCTION</scope>
</reference>
<reference key="8">
    <citation type="journal article" date="1998" name="J. Biol. Chem.">
        <title>Metalloregulation of FRE1 and FRE2 homologs in Saccharomyces cerevisiae.</title>
        <authorList>
            <person name="Martins L.J."/>
            <person name="Jensen L.T."/>
            <person name="Simon J.R."/>
            <person name="Keller G.L."/>
            <person name="Winge D.R."/>
        </authorList>
    </citation>
    <scope>INDUCTION</scope>
</reference>
<reference key="9">
    <citation type="journal article" date="1998" name="J. Biol. Chem.">
        <authorList>
            <person name="Martins L.J."/>
            <person name="Jensen L.T."/>
            <person name="Simon J.R."/>
            <person name="Keller G.L."/>
            <person name="Winge D.R."/>
        </authorList>
    </citation>
    <scope>ERRATUM OF PUBMED:9726978</scope>
</reference>
<reference key="10">
    <citation type="journal article" date="1999" name="Yeast">
        <title>Regulated expression of the Saccharomyces cerevisiae Fre1p/Fre2p Fe/Cu reductase related genes.</title>
        <authorList>
            <person name="Georgatsou E."/>
            <person name="Alexandraki D."/>
        </authorList>
    </citation>
    <scope>INDUCTION</scope>
</reference>
<reference key="11">
    <citation type="journal article" date="2001" name="J. Biol. Chem.">
        <title>The role of the FRE family of plasma membrane reductases in the uptake of siderophore-iron in Saccharomyces cerevisiae.</title>
        <authorList>
            <person name="Yun C.-W."/>
            <person name="Bauler M."/>
            <person name="Moore R.E."/>
            <person name="Klebba P.E."/>
            <person name="Philpott C.C."/>
        </authorList>
    </citation>
    <scope>FUNCTION</scope>
</reference>
<reference key="12">
    <citation type="journal article" date="2005" name="Mol. Cell. Biol.">
        <title>Direct activation of genes involved in intracellular iron use by the yeast iron-responsive transcription factor Aft2 without its paralog Aft1.</title>
        <authorList>
            <person name="Courel M."/>
            <person name="Lallet S."/>
            <person name="Camadro J.-M."/>
            <person name="Blaiseau P.-L."/>
        </authorList>
    </citation>
    <scope>INDUCTION BY AFT1 AND AFT2</scope>
</reference>
<reference key="13">
    <citation type="journal article" date="2006" name="Proc. Natl. Acad. Sci. U.S.A.">
        <title>A global topology map of the Saccharomyces cerevisiae membrane proteome.</title>
        <authorList>
            <person name="Kim H."/>
            <person name="Melen K."/>
            <person name="Oesterberg M."/>
            <person name="von Heijne G."/>
        </authorList>
    </citation>
    <scope>TOPOLOGY [LARGE SCALE ANALYSIS]</scope>
    <source>
        <strain>ATCC 208353 / W303-1A</strain>
    </source>
</reference>
<comment type="function">
    <text evidence="5 9">Metalloreductase responsible for reducing extracellular iron and copper prior to import. Catalyzes the reductive uptake of Fe(3+)-salts and Fe(3+) bound to catecholate or hydroxamate siderophores. Fe(3+) is reduced to Fe(2+), which then dissociates from the siderophore and can be imported by the high-affinity Fe(2+) transport complex in the plasma membrane. Also participates in Cu(2+) reduction and Cu(+) uptake.</text>
</comment>
<comment type="catalytic activity">
    <reaction>
        <text>2 a Fe(II)-siderophore + NADP(+) + H(+) = 2 a Fe(III)-siderophore + NADPH</text>
        <dbReference type="Rhea" id="RHEA:28795"/>
        <dbReference type="Rhea" id="RHEA-COMP:11342"/>
        <dbReference type="Rhea" id="RHEA-COMP:11344"/>
        <dbReference type="ChEBI" id="CHEBI:15378"/>
        <dbReference type="ChEBI" id="CHEBI:29033"/>
        <dbReference type="ChEBI" id="CHEBI:29034"/>
        <dbReference type="ChEBI" id="CHEBI:57783"/>
        <dbReference type="ChEBI" id="CHEBI:58349"/>
        <dbReference type="EC" id="1.16.1.9"/>
    </reaction>
</comment>
<comment type="cofactor">
    <cofactor evidence="12">
        <name>FAD</name>
        <dbReference type="ChEBI" id="CHEBI:57692"/>
    </cofactor>
</comment>
<comment type="cofactor">
    <cofactor evidence="1">
        <name>heme</name>
        <dbReference type="ChEBI" id="CHEBI:30413"/>
    </cofactor>
</comment>
<comment type="subcellular location">
    <subcellularLocation>
        <location evidence="8">Cell membrane</location>
        <topology evidence="8">Multi-pass membrane protein</topology>
    </subcellularLocation>
</comment>
<comment type="induction">
    <text evidence="4 6 7 9 10 11">By transcription factors AFT1 and AFT2 upon iron deprivation.</text>
</comment>
<comment type="similarity">
    <text evidence="12">Belongs to the ferric reductase (FRE) family.</text>
</comment>
<gene>
    <name type="primary">FRE2</name>
    <name type="ordered locus">YKL220C</name>
</gene>
<name>FRE2_YEAST</name>
<keyword id="KW-1003">Cell membrane</keyword>
<keyword id="KW-0186">Copper</keyword>
<keyword id="KW-0187">Copper transport</keyword>
<keyword id="KW-0249">Electron transport</keyword>
<keyword id="KW-0274">FAD</keyword>
<keyword id="KW-0285">Flavoprotein</keyword>
<keyword id="KW-0325">Glycoprotein</keyword>
<keyword id="KW-0349">Heme</keyword>
<keyword id="KW-0406">Ion transport</keyword>
<keyword id="KW-0408">Iron</keyword>
<keyword id="KW-0410">Iron transport</keyword>
<keyword id="KW-0472">Membrane</keyword>
<keyword id="KW-0479">Metal-binding</keyword>
<keyword id="KW-0521">NADP</keyword>
<keyword id="KW-0560">Oxidoreductase</keyword>
<keyword id="KW-1185">Reference proteome</keyword>
<keyword id="KW-0732">Signal</keyword>
<keyword id="KW-0812">Transmembrane</keyword>
<keyword id="KW-1133">Transmembrane helix</keyword>
<keyword id="KW-0813">Transport</keyword>
<accession>P36033</accession>
<accession>D6VWY3</accession>
<proteinExistence type="evidence at protein level"/>
<evidence type="ECO:0000250" key="1"/>
<evidence type="ECO:0000255" key="2"/>
<evidence type="ECO:0000255" key="3">
    <source>
        <dbReference type="PROSITE-ProRule" id="PRU00716"/>
    </source>
</evidence>
<evidence type="ECO:0000269" key="4">
    <source>
    </source>
</evidence>
<evidence type="ECO:0000269" key="5">
    <source>
    </source>
</evidence>
<evidence type="ECO:0000269" key="6">
    <source>
    </source>
</evidence>
<evidence type="ECO:0000269" key="7">
    <source>
    </source>
</evidence>
<evidence type="ECO:0000269" key="8">
    <source>
    </source>
</evidence>
<evidence type="ECO:0000269" key="9">
    <source>
    </source>
</evidence>
<evidence type="ECO:0000269" key="10">
    <source>
    </source>
</evidence>
<evidence type="ECO:0000269" key="11">
    <source>
    </source>
</evidence>
<evidence type="ECO:0000305" key="12"/>